<keyword id="KW-0012">Acyltransferase</keyword>
<keyword id="KW-0963">Cytoplasm</keyword>
<keyword id="KW-0808">Transferase</keyword>
<reference key="1">
    <citation type="journal article" date="2010" name="PLoS ONE">
        <title>The complete multipartite genome sequence of Cupriavidus necator JMP134, a versatile pollutant degrader.</title>
        <authorList>
            <person name="Lykidis A."/>
            <person name="Perez-Pantoja D."/>
            <person name="Ledger T."/>
            <person name="Mavromatis K."/>
            <person name="Anderson I.J."/>
            <person name="Ivanova N.N."/>
            <person name="Hooper S.D."/>
            <person name="Lapidus A."/>
            <person name="Lucas S."/>
            <person name="Gonzalez B."/>
            <person name="Kyrpides N.C."/>
        </authorList>
    </citation>
    <scope>NUCLEOTIDE SEQUENCE [LARGE SCALE GENOMIC DNA]</scope>
    <source>
        <strain>JMP134 / LMG 1197</strain>
    </source>
</reference>
<accession>Q472J4</accession>
<protein>
    <recommendedName>
        <fullName evidence="1">Leucyl/phenylalanyl-tRNA--protein transferase</fullName>
        <ecNumber evidence="1">2.3.2.6</ecNumber>
    </recommendedName>
    <alternativeName>
        <fullName evidence="1">L/F-transferase</fullName>
    </alternativeName>
    <alternativeName>
        <fullName evidence="1">Leucyltransferase</fullName>
    </alternativeName>
    <alternativeName>
        <fullName evidence="1">Phenyalanyltransferase</fullName>
    </alternativeName>
</protein>
<gene>
    <name evidence="1" type="primary">aat</name>
    <name type="ordered locus">Reut_A1319</name>
</gene>
<proteinExistence type="inferred from homology"/>
<feature type="chain" id="PRO_0000258083" description="Leucyl/phenylalanyl-tRNA--protein transferase">
    <location>
        <begin position="1"/>
        <end position="250"/>
    </location>
</feature>
<evidence type="ECO:0000255" key="1">
    <source>
        <dbReference type="HAMAP-Rule" id="MF_00688"/>
    </source>
</evidence>
<dbReference type="EC" id="2.3.2.6" evidence="1"/>
<dbReference type="EMBL" id="CP000090">
    <property type="protein sequence ID" value="AAZ60689.1"/>
    <property type="molecule type" value="Genomic_DNA"/>
</dbReference>
<dbReference type="SMR" id="Q472J4"/>
<dbReference type="STRING" id="264198.Reut_A1319"/>
<dbReference type="KEGG" id="reu:Reut_A1319"/>
<dbReference type="eggNOG" id="COG2360">
    <property type="taxonomic scope" value="Bacteria"/>
</dbReference>
<dbReference type="HOGENOM" id="CLU_075045_0_0_4"/>
<dbReference type="OrthoDB" id="9790282at2"/>
<dbReference type="GO" id="GO:0005737">
    <property type="term" value="C:cytoplasm"/>
    <property type="evidence" value="ECO:0007669"/>
    <property type="project" value="UniProtKB-SubCell"/>
</dbReference>
<dbReference type="GO" id="GO:0008914">
    <property type="term" value="F:leucyl-tRNA--protein transferase activity"/>
    <property type="evidence" value="ECO:0007669"/>
    <property type="project" value="UniProtKB-UniRule"/>
</dbReference>
<dbReference type="GO" id="GO:0030163">
    <property type="term" value="P:protein catabolic process"/>
    <property type="evidence" value="ECO:0007669"/>
    <property type="project" value="UniProtKB-UniRule"/>
</dbReference>
<dbReference type="Gene3D" id="3.40.630.70">
    <property type="entry name" value="Leucyl/phenylalanyl-tRNA-protein transferase, C-terminal domain"/>
    <property type="match status" value="1"/>
</dbReference>
<dbReference type="Gene3D" id="3.30.70.3550">
    <property type="entry name" value="Leucyl/phenylalanyl-tRNA-protein transferase, N-terminal domain"/>
    <property type="match status" value="1"/>
</dbReference>
<dbReference type="HAMAP" id="MF_00688">
    <property type="entry name" value="Leu_Phe_trans"/>
    <property type="match status" value="1"/>
</dbReference>
<dbReference type="InterPro" id="IPR016181">
    <property type="entry name" value="Acyl_CoA_acyltransferase"/>
</dbReference>
<dbReference type="InterPro" id="IPR004616">
    <property type="entry name" value="Leu/Phe-tRNA_Trfase"/>
</dbReference>
<dbReference type="InterPro" id="IPR042203">
    <property type="entry name" value="Leu/Phe-tRNA_Trfase_C"/>
</dbReference>
<dbReference type="InterPro" id="IPR042221">
    <property type="entry name" value="Leu/Phe-tRNA_Trfase_N"/>
</dbReference>
<dbReference type="NCBIfam" id="TIGR00667">
    <property type="entry name" value="aat"/>
    <property type="match status" value="1"/>
</dbReference>
<dbReference type="PANTHER" id="PTHR30098">
    <property type="entry name" value="LEUCYL/PHENYLALANYL-TRNA--PROTEIN TRANSFERASE"/>
    <property type="match status" value="1"/>
</dbReference>
<dbReference type="PANTHER" id="PTHR30098:SF2">
    <property type="entry name" value="LEUCYL_PHENYLALANYL-TRNA--PROTEIN TRANSFERASE"/>
    <property type="match status" value="1"/>
</dbReference>
<dbReference type="Pfam" id="PF03588">
    <property type="entry name" value="Leu_Phe_trans"/>
    <property type="match status" value="1"/>
</dbReference>
<dbReference type="SUPFAM" id="SSF55729">
    <property type="entry name" value="Acyl-CoA N-acyltransferases (Nat)"/>
    <property type="match status" value="1"/>
</dbReference>
<name>LFTR_CUPPJ</name>
<comment type="function">
    <text evidence="1">Functions in the N-end rule pathway of protein degradation where it conjugates Leu, Phe and, less efficiently, Met from aminoacyl-tRNAs to the N-termini of proteins containing an N-terminal arginine or lysine.</text>
</comment>
<comment type="catalytic activity">
    <reaction evidence="1">
        <text>N-terminal L-lysyl-[protein] + L-leucyl-tRNA(Leu) = N-terminal L-leucyl-L-lysyl-[protein] + tRNA(Leu) + H(+)</text>
        <dbReference type="Rhea" id="RHEA:12340"/>
        <dbReference type="Rhea" id="RHEA-COMP:9613"/>
        <dbReference type="Rhea" id="RHEA-COMP:9622"/>
        <dbReference type="Rhea" id="RHEA-COMP:12670"/>
        <dbReference type="Rhea" id="RHEA-COMP:12671"/>
        <dbReference type="ChEBI" id="CHEBI:15378"/>
        <dbReference type="ChEBI" id="CHEBI:65249"/>
        <dbReference type="ChEBI" id="CHEBI:78442"/>
        <dbReference type="ChEBI" id="CHEBI:78494"/>
        <dbReference type="ChEBI" id="CHEBI:133043"/>
        <dbReference type="EC" id="2.3.2.6"/>
    </reaction>
</comment>
<comment type="catalytic activity">
    <reaction evidence="1">
        <text>N-terminal L-arginyl-[protein] + L-leucyl-tRNA(Leu) = N-terminal L-leucyl-L-arginyl-[protein] + tRNA(Leu) + H(+)</text>
        <dbReference type="Rhea" id="RHEA:50416"/>
        <dbReference type="Rhea" id="RHEA-COMP:9613"/>
        <dbReference type="Rhea" id="RHEA-COMP:9622"/>
        <dbReference type="Rhea" id="RHEA-COMP:12672"/>
        <dbReference type="Rhea" id="RHEA-COMP:12673"/>
        <dbReference type="ChEBI" id="CHEBI:15378"/>
        <dbReference type="ChEBI" id="CHEBI:64719"/>
        <dbReference type="ChEBI" id="CHEBI:78442"/>
        <dbReference type="ChEBI" id="CHEBI:78494"/>
        <dbReference type="ChEBI" id="CHEBI:133044"/>
        <dbReference type="EC" id="2.3.2.6"/>
    </reaction>
</comment>
<comment type="catalytic activity">
    <reaction evidence="1">
        <text>L-phenylalanyl-tRNA(Phe) + an N-terminal L-alpha-aminoacyl-[protein] = an N-terminal L-phenylalanyl-L-alpha-aminoacyl-[protein] + tRNA(Phe)</text>
        <dbReference type="Rhea" id="RHEA:43632"/>
        <dbReference type="Rhea" id="RHEA-COMP:9668"/>
        <dbReference type="Rhea" id="RHEA-COMP:9699"/>
        <dbReference type="Rhea" id="RHEA-COMP:10636"/>
        <dbReference type="Rhea" id="RHEA-COMP:10637"/>
        <dbReference type="ChEBI" id="CHEBI:78442"/>
        <dbReference type="ChEBI" id="CHEBI:78531"/>
        <dbReference type="ChEBI" id="CHEBI:78597"/>
        <dbReference type="ChEBI" id="CHEBI:83561"/>
        <dbReference type="EC" id="2.3.2.6"/>
    </reaction>
</comment>
<comment type="subcellular location">
    <subcellularLocation>
        <location evidence="1">Cytoplasm</location>
    </subcellularLocation>
</comment>
<comment type="similarity">
    <text evidence="1">Belongs to the L/F-transferase family.</text>
</comment>
<organism>
    <name type="scientific">Cupriavidus pinatubonensis (strain JMP 134 / LMG 1197)</name>
    <name type="common">Cupriavidus necator (strain JMP 134)</name>
    <dbReference type="NCBI Taxonomy" id="264198"/>
    <lineage>
        <taxon>Bacteria</taxon>
        <taxon>Pseudomonadati</taxon>
        <taxon>Pseudomonadota</taxon>
        <taxon>Betaproteobacteria</taxon>
        <taxon>Burkholderiales</taxon>
        <taxon>Burkholderiaceae</taxon>
        <taxon>Cupriavidus</taxon>
    </lineage>
</organism>
<sequence length="250" mass="27751">MIAWLDPHDPFPPVERALGPATEAPGLLAASRDLSPQRLLLAYRQGIFPWYSVGQPVLWWSTDPRMVLAPQALKISATFRKTLRRVLRDPDWEIRVDDDFLAVMRACAMTPREGQDGTWITREIIAAYGALHSNGMAHSVETWYRGTRVGGLYGVALGRMFYGESMFAHRTDASKIALAALCAFLGSHGVPMIDCQQETDHLASLGARPIARAEFLAHVRNASAQPAITPWWFDKSVLERWTATPATPAV</sequence>